<sequence>MTTGFLQKIFGSRNQRLVKQYQKTVAAINALETQIETLTDDQLRGKTGEFRQRIAAGESLDKLLPEAFAVCREASRRVLKMRHFDVQMIGGMVLHYGKIAEMRTGEGKTLVATLAAYLNALAGRGVHVVTVNDYLAQRDAEWMGRLYNFLGLSVGINLSGMEHDQKQAAYAADITYGTNNEFGFDYLRDNMVYETDSRVQRPLNFAVVDEVDSILIDEARTPLIISGQAEDHTELYVRMNALPPLLERQIGEEKADGTGVEKPGDYTLDEKGRQVFLTESGHEKAERMLAEWGLIGDGESLYAPQNITLMHHVYAALRAHTLFHRDQHYVVQNDEVIIVDEFTGRLMPGRRWSDGLHQAVEAKEHVKIQSENQTLASITFQNYFRMYAKLSGMTGTADTEAYEFNEIYGLETVVIPTNRPPKRIDKQDQIYKTAKERYDAVIRDIRECHERGQPVLVGTTSIENSELLSHLLKQAGLPHEVLNAKQHAREAAIVAEAGRPKRITIATNMAGRGTDIVLGGNVEKQAAFIEADESIPADEKARRIQQLHDEWETLHEQVKTAGGLHIIGTERHESRRIDNQLRGRAGRQGDPGSSRFYLSLEDPLLRIFAGDRVRAIMDRLKMPEGEAIEAGIVTRSIESAQRKVEARNFDIRKQLLEYDDVSNDQRKVIYQQRNELLEAHDIAETIGAMRHGVISEVVRQFVPAGSIEEQWDLPELEETLRNDWQLDLAIQEMVNESSSINADEILDAVTTAADEHYEAKVALVGRESFSAFERSIMLQTLDRLWREHLAALDHLRQGIHLRGYAQKNPKQEYKREAFELFAAMLDAVKQEVTRIVMNVQIQSPEQLEEAAEQIEEQGGQLGNVEFQHADFAAAAAAATAGGAVVADATAEMVGHAMSHSGPAGEVPRVGRNDPCPCGSGKKYKHCHGKLN</sequence>
<organism>
    <name type="scientific">Burkholderia pseudomallei (strain K96243)</name>
    <dbReference type="NCBI Taxonomy" id="272560"/>
    <lineage>
        <taxon>Bacteria</taxon>
        <taxon>Pseudomonadati</taxon>
        <taxon>Pseudomonadota</taxon>
        <taxon>Betaproteobacteria</taxon>
        <taxon>Burkholderiales</taxon>
        <taxon>Burkholderiaceae</taxon>
        <taxon>Burkholderia</taxon>
        <taxon>pseudomallei group</taxon>
    </lineage>
</organism>
<keyword id="KW-0067">ATP-binding</keyword>
<keyword id="KW-0997">Cell inner membrane</keyword>
<keyword id="KW-1003">Cell membrane</keyword>
<keyword id="KW-0963">Cytoplasm</keyword>
<keyword id="KW-0472">Membrane</keyword>
<keyword id="KW-0479">Metal-binding</keyword>
<keyword id="KW-0547">Nucleotide-binding</keyword>
<keyword id="KW-0653">Protein transport</keyword>
<keyword id="KW-1185">Reference proteome</keyword>
<keyword id="KW-1278">Translocase</keyword>
<keyword id="KW-0811">Translocation</keyword>
<keyword id="KW-0813">Transport</keyword>
<keyword id="KW-0862">Zinc</keyword>
<proteinExistence type="inferred from homology"/>
<accession>Q63QK6</accession>
<dbReference type="EC" id="7.4.2.8" evidence="1"/>
<dbReference type="EMBL" id="BX571965">
    <property type="protein sequence ID" value="CAH37028.1"/>
    <property type="molecule type" value="Genomic_DNA"/>
</dbReference>
<dbReference type="RefSeq" id="WP_004194125.1">
    <property type="nucleotide sequence ID" value="NZ_CP009538.1"/>
</dbReference>
<dbReference type="RefSeq" id="YP_109612.1">
    <property type="nucleotide sequence ID" value="NC_006350.1"/>
</dbReference>
<dbReference type="SMR" id="Q63QK6"/>
<dbReference type="STRING" id="272560.BPSL3016"/>
<dbReference type="GeneID" id="92980233"/>
<dbReference type="KEGG" id="bps:BPSL3016"/>
<dbReference type="PATRIC" id="fig|272560.51.peg.2252"/>
<dbReference type="eggNOG" id="COG0653">
    <property type="taxonomic scope" value="Bacteria"/>
</dbReference>
<dbReference type="Proteomes" id="UP000000605">
    <property type="component" value="Chromosome 1"/>
</dbReference>
<dbReference type="GO" id="GO:0031522">
    <property type="term" value="C:cell envelope Sec protein transport complex"/>
    <property type="evidence" value="ECO:0007669"/>
    <property type="project" value="TreeGrafter"/>
</dbReference>
<dbReference type="GO" id="GO:0005829">
    <property type="term" value="C:cytosol"/>
    <property type="evidence" value="ECO:0007669"/>
    <property type="project" value="TreeGrafter"/>
</dbReference>
<dbReference type="GO" id="GO:0005886">
    <property type="term" value="C:plasma membrane"/>
    <property type="evidence" value="ECO:0007669"/>
    <property type="project" value="UniProtKB-SubCell"/>
</dbReference>
<dbReference type="GO" id="GO:0005524">
    <property type="term" value="F:ATP binding"/>
    <property type="evidence" value="ECO:0007669"/>
    <property type="project" value="UniProtKB-UniRule"/>
</dbReference>
<dbReference type="GO" id="GO:0046872">
    <property type="term" value="F:metal ion binding"/>
    <property type="evidence" value="ECO:0007669"/>
    <property type="project" value="UniProtKB-KW"/>
</dbReference>
<dbReference type="GO" id="GO:0008564">
    <property type="term" value="F:protein-exporting ATPase activity"/>
    <property type="evidence" value="ECO:0007669"/>
    <property type="project" value="UniProtKB-EC"/>
</dbReference>
<dbReference type="GO" id="GO:0065002">
    <property type="term" value="P:intracellular protein transmembrane transport"/>
    <property type="evidence" value="ECO:0007669"/>
    <property type="project" value="UniProtKB-UniRule"/>
</dbReference>
<dbReference type="GO" id="GO:0017038">
    <property type="term" value="P:protein import"/>
    <property type="evidence" value="ECO:0007669"/>
    <property type="project" value="InterPro"/>
</dbReference>
<dbReference type="GO" id="GO:0006605">
    <property type="term" value="P:protein targeting"/>
    <property type="evidence" value="ECO:0007669"/>
    <property type="project" value="UniProtKB-UniRule"/>
</dbReference>
<dbReference type="GO" id="GO:0043952">
    <property type="term" value="P:protein transport by the Sec complex"/>
    <property type="evidence" value="ECO:0007669"/>
    <property type="project" value="TreeGrafter"/>
</dbReference>
<dbReference type="CDD" id="cd17928">
    <property type="entry name" value="DEXDc_SecA"/>
    <property type="match status" value="1"/>
</dbReference>
<dbReference type="CDD" id="cd18803">
    <property type="entry name" value="SF2_C_secA"/>
    <property type="match status" value="1"/>
</dbReference>
<dbReference type="FunFam" id="3.40.50.300:FF:000081">
    <property type="entry name" value="Preprotein translocase subunit SecA"/>
    <property type="match status" value="1"/>
</dbReference>
<dbReference type="FunFam" id="3.40.50.300:FF:000113">
    <property type="entry name" value="Preprotein translocase subunit SecA"/>
    <property type="match status" value="1"/>
</dbReference>
<dbReference type="FunFam" id="3.90.1440.10:FF:000001">
    <property type="entry name" value="Preprotein translocase subunit SecA"/>
    <property type="match status" value="1"/>
</dbReference>
<dbReference type="FunFam" id="1.10.3060.10:FF:000003">
    <property type="entry name" value="Protein translocase subunit SecA"/>
    <property type="match status" value="1"/>
</dbReference>
<dbReference type="Gene3D" id="1.10.3060.10">
    <property type="entry name" value="Helical scaffold and wing domains of SecA"/>
    <property type="match status" value="1"/>
</dbReference>
<dbReference type="Gene3D" id="3.40.50.300">
    <property type="entry name" value="P-loop containing nucleotide triphosphate hydrolases"/>
    <property type="match status" value="2"/>
</dbReference>
<dbReference type="Gene3D" id="3.90.1440.10">
    <property type="entry name" value="SecA, preprotein cross-linking domain"/>
    <property type="match status" value="1"/>
</dbReference>
<dbReference type="HAMAP" id="MF_01382">
    <property type="entry name" value="SecA"/>
    <property type="match status" value="1"/>
</dbReference>
<dbReference type="InterPro" id="IPR014001">
    <property type="entry name" value="Helicase_ATP-bd"/>
</dbReference>
<dbReference type="InterPro" id="IPR001650">
    <property type="entry name" value="Helicase_C-like"/>
</dbReference>
<dbReference type="InterPro" id="IPR027417">
    <property type="entry name" value="P-loop_NTPase"/>
</dbReference>
<dbReference type="InterPro" id="IPR004027">
    <property type="entry name" value="SEC_C_motif"/>
</dbReference>
<dbReference type="InterPro" id="IPR000185">
    <property type="entry name" value="SecA"/>
</dbReference>
<dbReference type="InterPro" id="IPR020937">
    <property type="entry name" value="SecA_CS"/>
</dbReference>
<dbReference type="InterPro" id="IPR011115">
    <property type="entry name" value="SecA_DEAD"/>
</dbReference>
<dbReference type="InterPro" id="IPR014018">
    <property type="entry name" value="SecA_motor_DEAD"/>
</dbReference>
<dbReference type="InterPro" id="IPR011130">
    <property type="entry name" value="SecA_preprotein_X-link_dom"/>
</dbReference>
<dbReference type="InterPro" id="IPR044722">
    <property type="entry name" value="SecA_SF2_C"/>
</dbReference>
<dbReference type="InterPro" id="IPR011116">
    <property type="entry name" value="SecA_Wing/Scaffold"/>
</dbReference>
<dbReference type="InterPro" id="IPR036266">
    <property type="entry name" value="SecA_Wing/Scaffold_sf"/>
</dbReference>
<dbReference type="InterPro" id="IPR036670">
    <property type="entry name" value="SecA_X-link_sf"/>
</dbReference>
<dbReference type="NCBIfam" id="NF009538">
    <property type="entry name" value="PRK12904.1"/>
    <property type="match status" value="1"/>
</dbReference>
<dbReference type="NCBIfam" id="TIGR00963">
    <property type="entry name" value="secA"/>
    <property type="match status" value="1"/>
</dbReference>
<dbReference type="PANTHER" id="PTHR30612:SF0">
    <property type="entry name" value="CHLOROPLAST PROTEIN-TRANSPORTING ATPASE"/>
    <property type="match status" value="1"/>
</dbReference>
<dbReference type="PANTHER" id="PTHR30612">
    <property type="entry name" value="SECA INNER MEMBRANE COMPONENT OF SEC PROTEIN SECRETION SYSTEM"/>
    <property type="match status" value="1"/>
</dbReference>
<dbReference type="Pfam" id="PF21090">
    <property type="entry name" value="P-loop_SecA"/>
    <property type="match status" value="1"/>
</dbReference>
<dbReference type="Pfam" id="PF02810">
    <property type="entry name" value="SEC-C"/>
    <property type="match status" value="1"/>
</dbReference>
<dbReference type="Pfam" id="PF07517">
    <property type="entry name" value="SecA_DEAD"/>
    <property type="match status" value="1"/>
</dbReference>
<dbReference type="Pfam" id="PF01043">
    <property type="entry name" value="SecA_PP_bind"/>
    <property type="match status" value="1"/>
</dbReference>
<dbReference type="Pfam" id="PF07516">
    <property type="entry name" value="SecA_SW"/>
    <property type="match status" value="1"/>
</dbReference>
<dbReference type="PRINTS" id="PR00906">
    <property type="entry name" value="SECA"/>
</dbReference>
<dbReference type="SMART" id="SM00957">
    <property type="entry name" value="SecA_DEAD"/>
    <property type="match status" value="1"/>
</dbReference>
<dbReference type="SMART" id="SM00958">
    <property type="entry name" value="SecA_PP_bind"/>
    <property type="match status" value="1"/>
</dbReference>
<dbReference type="SUPFAM" id="SSF81886">
    <property type="entry name" value="Helical scaffold and wing domains of SecA"/>
    <property type="match status" value="1"/>
</dbReference>
<dbReference type="SUPFAM" id="SSF52540">
    <property type="entry name" value="P-loop containing nucleoside triphosphate hydrolases"/>
    <property type="match status" value="2"/>
</dbReference>
<dbReference type="SUPFAM" id="SSF81767">
    <property type="entry name" value="Pre-protein crosslinking domain of SecA"/>
    <property type="match status" value="1"/>
</dbReference>
<dbReference type="PROSITE" id="PS01312">
    <property type="entry name" value="SECA"/>
    <property type="match status" value="1"/>
</dbReference>
<dbReference type="PROSITE" id="PS51196">
    <property type="entry name" value="SECA_MOTOR_DEAD"/>
    <property type="match status" value="1"/>
</dbReference>
<reference key="1">
    <citation type="journal article" date="2004" name="Proc. Natl. Acad. Sci. U.S.A.">
        <title>Genomic plasticity of the causative agent of melioidosis, Burkholderia pseudomallei.</title>
        <authorList>
            <person name="Holden M.T.G."/>
            <person name="Titball R.W."/>
            <person name="Peacock S.J."/>
            <person name="Cerdeno-Tarraga A.-M."/>
            <person name="Atkins T."/>
            <person name="Crossman L.C."/>
            <person name="Pitt T."/>
            <person name="Churcher C."/>
            <person name="Mungall K.L."/>
            <person name="Bentley S.D."/>
            <person name="Sebaihia M."/>
            <person name="Thomson N.R."/>
            <person name="Bason N."/>
            <person name="Beacham I.R."/>
            <person name="Brooks K."/>
            <person name="Brown K.A."/>
            <person name="Brown N.F."/>
            <person name="Challis G.L."/>
            <person name="Cherevach I."/>
            <person name="Chillingworth T."/>
            <person name="Cronin A."/>
            <person name="Crossett B."/>
            <person name="Davis P."/>
            <person name="DeShazer D."/>
            <person name="Feltwell T."/>
            <person name="Fraser A."/>
            <person name="Hance Z."/>
            <person name="Hauser H."/>
            <person name="Holroyd S."/>
            <person name="Jagels K."/>
            <person name="Keith K.E."/>
            <person name="Maddison M."/>
            <person name="Moule S."/>
            <person name="Price C."/>
            <person name="Quail M.A."/>
            <person name="Rabbinowitsch E."/>
            <person name="Rutherford K."/>
            <person name="Sanders M."/>
            <person name="Simmonds M."/>
            <person name="Songsivilai S."/>
            <person name="Stevens K."/>
            <person name="Tumapa S."/>
            <person name="Vesaratchavest M."/>
            <person name="Whitehead S."/>
            <person name="Yeats C."/>
            <person name="Barrell B.G."/>
            <person name="Oyston P.C.F."/>
            <person name="Parkhill J."/>
        </authorList>
    </citation>
    <scope>NUCLEOTIDE SEQUENCE [LARGE SCALE GENOMIC DNA]</scope>
    <source>
        <strain>K96243</strain>
    </source>
</reference>
<feature type="chain" id="PRO_0000320753" description="Protein translocase subunit SecA">
    <location>
        <begin position="1"/>
        <end position="931"/>
    </location>
</feature>
<feature type="binding site" evidence="1">
    <location>
        <position position="87"/>
    </location>
    <ligand>
        <name>ATP</name>
        <dbReference type="ChEBI" id="CHEBI:30616"/>
    </ligand>
</feature>
<feature type="binding site" evidence="1">
    <location>
        <begin position="105"/>
        <end position="109"/>
    </location>
    <ligand>
        <name>ATP</name>
        <dbReference type="ChEBI" id="CHEBI:30616"/>
    </ligand>
</feature>
<feature type="binding site" evidence="1">
    <location>
        <position position="515"/>
    </location>
    <ligand>
        <name>ATP</name>
        <dbReference type="ChEBI" id="CHEBI:30616"/>
    </ligand>
</feature>
<feature type="binding site" evidence="1">
    <location>
        <position position="915"/>
    </location>
    <ligand>
        <name>Zn(2+)</name>
        <dbReference type="ChEBI" id="CHEBI:29105"/>
    </ligand>
</feature>
<feature type="binding site" evidence="1">
    <location>
        <position position="917"/>
    </location>
    <ligand>
        <name>Zn(2+)</name>
        <dbReference type="ChEBI" id="CHEBI:29105"/>
    </ligand>
</feature>
<feature type="binding site" evidence="1">
    <location>
        <position position="926"/>
    </location>
    <ligand>
        <name>Zn(2+)</name>
        <dbReference type="ChEBI" id="CHEBI:29105"/>
    </ligand>
</feature>
<feature type="binding site" evidence="1">
    <location>
        <position position="927"/>
    </location>
    <ligand>
        <name>Zn(2+)</name>
        <dbReference type="ChEBI" id="CHEBI:29105"/>
    </ligand>
</feature>
<protein>
    <recommendedName>
        <fullName evidence="1">Protein translocase subunit SecA</fullName>
        <ecNumber evidence="1">7.4.2.8</ecNumber>
    </recommendedName>
</protein>
<comment type="function">
    <text evidence="1">Part of the Sec protein translocase complex. Interacts with the SecYEG preprotein conducting channel. Has a central role in coupling the hydrolysis of ATP to the transfer of proteins into and across the cell membrane, serving both as a receptor for the preprotein-SecB complex and as an ATP-driven molecular motor driving the stepwise translocation of polypeptide chains across the membrane.</text>
</comment>
<comment type="catalytic activity">
    <reaction evidence="1">
        <text>ATP + H2O + cellular proteinSide 1 = ADP + phosphate + cellular proteinSide 2.</text>
        <dbReference type="EC" id="7.4.2.8"/>
    </reaction>
</comment>
<comment type="cofactor">
    <cofactor evidence="1">
        <name>Zn(2+)</name>
        <dbReference type="ChEBI" id="CHEBI:29105"/>
    </cofactor>
    <text evidence="1">May bind 1 zinc ion per subunit.</text>
</comment>
<comment type="subunit">
    <text evidence="1">Monomer and homodimer. Part of the essential Sec protein translocation apparatus which comprises SecA, SecYEG and auxiliary proteins SecDF-YajC and YidC.</text>
</comment>
<comment type="subcellular location">
    <subcellularLocation>
        <location evidence="1">Cell inner membrane</location>
        <topology evidence="1">Peripheral membrane protein</topology>
        <orientation evidence="1">Cytoplasmic side</orientation>
    </subcellularLocation>
    <subcellularLocation>
        <location evidence="1">Cytoplasm</location>
    </subcellularLocation>
    <text evidence="1">Distribution is 50-50.</text>
</comment>
<comment type="similarity">
    <text evidence="1">Belongs to the SecA family.</text>
</comment>
<name>SECA_BURPS</name>
<gene>
    <name evidence="1" type="primary">secA</name>
    <name type="ordered locus">BPSL3016</name>
</gene>
<evidence type="ECO:0000255" key="1">
    <source>
        <dbReference type="HAMAP-Rule" id="MF_01382"/>
    </source>
</evidence>